<organism>
    <name type="scientific">Arabidopsis thaliana</name>
    <name type="common">Mouse-ear cress</name>
    <dbReference type="NCBI Taxonomy" id="3702"/>
    <lineage>
        <taxon>Eukaryota</taxon>
        <taxon>Viridiplantae</taxon>
        <taxon>Streptophyta</taxon>
        <taxon>Embryophyta</taxon>
        <taxon>Tracheophyta</taxon>
        <taxon>Spermatophyta</taxon>
        <taxon>Magnoliopsida</taxon>
        <taxon>eudicotyledons</taxon>
        <taxon>Gunneridae</taxon>
        <taxon>Pentapetalae</taxon>
        <taxon>rosids</taxon>
        <taxon>malvids</taxon>
        <taxon>Brassicales</taxon>
        <taxon>Brassicaceae</taxon>
        <taxon>Camelineae</taxon>
        <taxon>Arabidopsis</taxon>
    </lineage>
</organism>
<proteinExistence type="evidence at transcript level"/>
<gene>
    <name type="primary">FH12</name>
    <name type="ordered locus">At1g42980</name>
    <name type="ORF">F13A11.4</name>
</gene>
<feature type="chain" id="PRO_0000308537" description="Formin-like protein 12">
    <location>
        <begin position="1"/>
        <end position="299"/>
    </location>
</feature>
<feature type="domain" description="FH2" evidence="1">
    <location>
        <begin position="1"/>
        <end position="295"/>
    </location>
</feature>
<reference key="1">
    <citation type="journal article" date="2000" name="Nature">
        <title>Sequence and analysis of chromosome 1 of the plant Arabidopsis thaliana.</title>
        <authorList>
            <person name="Theologis A."/>
            <person name="Ecker J.R."/>
            <person name="Palm C.J."/>
            <person name="Federspiel N.A."/>
            <person name="Kaul S."/>
            <person name="White O."/>
            <person name="Alonso J."/>
            <person name="Altafi H."/>
            <person name="Araujo R."/>
            <person name="Bowman C.L."/>
            <person name="Brooks S.Y."/>
            <person name="Buehler E."/>
            <person name="Chan A."/>
            <person name="Chao Q."/>
            <person name="Chen H."/>
            <person name="Cheuk R.F."/>
            <person name="Chin C.W."/>
            <person name="Chung M.K."/>
            <person name="Conn L."/>
            <person name="Conway A.B."/>
            <person name="Conway A.R."/>
            <person name="Creasy T.H."/>
            <person name="Dewar K."/>
            <person name="Dunn P."/>
            <person name="Etgu P."/>
            <person name="Feldblyum T.V."/>
            <person name="Feng J.-D."/>
            <person name="Fong B."/>
            <person name="Fujii C.Y."/>
            <person name="Gill J.E."/>
            <person name="Goldsmith A.D."/>
            <person name="Haas B."/>
            <person name="Hansen N.F."/>
            <person name="Hughes B."/>
            <person name="Huizar L."/>
            <person name="Hunter J.L."/>
            <person name="Jenkins J."/>
            <person name="Johnson-Hopson C."/>
            <person name="Khan S."/>
            <person name="Khaykin E."/>
            <person name="Kim C.J."/>
            <person name="Koo H.L."/>
            <person name="Kremenetskaia I."/>
            <person name="Kurtz D.B."/>
            <person name="Kwan A."/>
            <person name="Lam B."/>
            <person name="Langin-Hooper S."/>
            <person name="Lee A."/>
            <person name="Lee J.M."/>
            <person name="Lenz C.A."/>
            <person name="Li J.H."/>
            <person name="Li Y.-P."/>
            <person name="Lin X."/>
            <person name="Liu S.X."/>
            <person name="Liu Z.A."/>
            <person name="Luros J.S."/>
            <person name="Maiti R."/>
            <person name="Marziali A."/>
            <person name="Militscher J."/>
            <person name="Miranda M."/>
            <person name="Nguyen M."/>
            <person name="Nierman W.C."/>
            <person name="Osborne B.I."/>
            <person name="Pai G."/>
            <person name="Peterson J."/>
            <person name="Pham P.K."/>
            <person name="Rizzo M."/>
            <person name="Rooney T."/>
            <person name="Rowley D."/>
            <person name="Sakano H."/>
            <person name="Salzberg S.L."/>
            <person name="Schwartz J.R."/>
            <person name="Shinn P."/>
            <person name="Southwick A.M."/>
            <person name="Sun H."/>
            <person name="Tallon L.J."/>
            <person name="Tambunga G."/>
            <person name="Toriumi M.J."/>
            <person name="Town C.D."/>
            <person name="Utterback T."/>
            <person name="Van Aken S."/>
            <person name="Vaysberg M."/>
            <person name="Vysotskaia V.S."/>
            <person name="Walker M."/>
            <person name="Wu D."/>
            <person name="Yu G."/>
            <person name="Fraser C.M."/>
            <person name="Venter J.C."/>
            <person name="Davis R.W."/>
        </authorList>
    </citation>
    <scope>NUCLEOTIDE SEQUENCE [LARGE SCALE GENOMIC DNA]</scope>
    <source>
        <strain>cv. Columbia</strain>
    </source>
</reference>
<reference key="2">
    <citation type="journal article" date="2017" name="Plant J.">
        <title>Araport11: a complete reannotation of the Arabidopsis thaliana reference genome.</title>
        <authorList>
            <person name="Cheng C.Y."/>
            <person name="Krishnakumar V."/>
            <person name="Chan A.P."/>
            <person name="Thibaud-Nissen F."/>
            <person name="Schobel S."/>
            <person name="Town C.D."/>
        </authorList>
    </citation>
    <scope>GENOME REANNOTATION</scope>
    <source>
        <strain>cv. Columbia</strain>
    </source>
</reference>
<reference key="3">
    <citation type="journal article" date="2002" name="Trends Plant Sci.">
        <title>Formins: intermediates in signal-transduction cascades that affect cytoskeletal reorganization.</title>
        <authorList>
            <person name="Deeks M.J."/>
            <person name="Hussey P.J."/>
            <person name="Davies B."/>
        </authorList>
    </citation>
    <scope>GENE FAMILY ORGANIZATION</scope>
    <scope>NOMENCLATURE</scope>
</reference>
<reference key="4">
    <citation type="journal article" date="2004" name="BMC Genomics">
        <title>Formin homology 2 domains occur in multiple contexts in angiosperms.</title>
        <authorList>
            <person name="Cvrckova F."/>
            <person name="Novotny M."/>
            <person name="Pickova D."/>
            <person name="Zarsky V."/>
        </authorList>
    </citation>
    <scope>GENE FAMILY ORGANIZATION</scope>
    <scope>NOMENCLATURE</scope>
</reference>
<protein>
    <recommendedName>
        <fullName>Formin-like protein 12</fullName>
        <shortName>AtFH12</shortName>
    </recommendedName>
</protein>
<evidence type="ECO:0000255" key="1">
    <source>
        <dbReference type="PROSITE-ProRule" id="PRU00774"/>
    </source>
</evidence>
<evidence type="ECO:0000305" key="2"/>
<comment type="similarity">
    <text evidence="2">Belongs to the formin-like family. Class-II subfamily.</text>
</comment>
<comment type="sequence caution" evidence="2">
    <conflict type="erroneous gene model prediction">
        <sequence resource="EMBL-CDS" id="AAG51518"/>
    </conflict>
</comment>
<keyword id="KW-1185">Reference proteome</keyword>
<sequence>MASNCEKMLSKIKIPLPDMLNAVLDLDSSAVIIDQIKNLIKICWSKEEMDRLRNSAGGDKEVLGKCEEIFGELMMVPRIEPKLRVFAFKVEYPSRVSDLKMWMHTIIAATKEITGSVKLFRIMQTSLTMQVLRGSNVECGLDSLVKLCDNVYLMHDFCKLLDFGNDLVHLEAASRIELETITNKMQELFDIEEEVNDEFLASENDGANFVGYRNVVHDFLCTIDGDKQLLNILYAEVGGLVNSYIAEYPSGVRFKEATNILTRFVETFYKSREEIERQAEAEKEILEKRKMNIKQNGNL</sequence>
<dbReference type="EMBL" id="AC068324">
    <property type="protein sequence ID" value="AAG51518.1"/>
    <property type="status" value="ALT_SEQ"/>
    <property type="molecule type" value="Genomic_DNA"/>
</dbReference>
<dbReference type="EMBL" id="CP002684">
    <property type="protein sequence ID" value="AEE31934.1"/>
    <property type="molecule type" value="Genomic_DNA"/>
</dbReference>
<dbReference type="PIR" id="D96497">
    <property type="entry name" value="D96497"/>
</dbReference>
<dbReference type="RefSeq" id="NP_174997.2">
    <property type="nucleotide sequence ID" value="NM_103457.3"/>
</dbReference>
<dbReference type="SMR" id="Q9C7S1"/>
<dbReference type="STRING" id="3702.Q9C7S1"/>
<dbReference type="iPTMnet" id="Q9C7S1"/>
<dbReference type="PaxDb" id="3702-AT1G42980.1"/>
<dbReference type="EnsemblPlants" id="AT1G42980.1">
    <property type="protein sequence ID" value="AT1G42980.1"/>
    <property type="gene ID" value="AT1G42980"/>
</dbReference>
<dbReference type="GeneID" id="840896"/>
<dbReference type="Gramene" id="AT1G42980.1">
    <property type="protein sequence ID" value="AT1G42980.1"/>
    <property type="gene ID" value="AT1G42980"/>
</dbReference>
<dbReference type="KEGG" id="ath:AT1G42980"/>
<dbReference type="Araport" id="AT1G42980"/>
<dbReference type="TAIR" id="AT1G42980"/>
<dbReference type="eggNOG" id="KOG1922">
    <property type="taxonomic scope" value="Eukaryota"/>
</dbReference>
<dbReference type="HOGENOM" id="CLU_028505_0_0_1"/>
<dbReference type="InParanoid" id="Q9C7S1"/>
<dbReference type="OMA" id="VPRIEPK"/>
<dbReference type="PhylomeDB" id="Q9C7S1"/>
<dbReference type="PRO" id="PR:Q9C7S1"/>
<dbReference type="Proteomes" id="UP000006548">
    <property type="component" value="Chromosome 1"/>
</dbReference>
<dbReference type="ExpressionAtlas" id="Q9C7S1">
    <property type="expression patterns" value="baseline and differential"/>
</dbReference>
<dbReference type="GO" id="GO:0003779">
    <property type="term" value="F:actin binding"/>
    <property type="evidence" value="ECO:0000250"/>
    <property type="project" value="TAIR"/>
</dbReference>
<dbReference type="Gene3D" id="1.20.58.2220">
    <property type="entry name" value="Formin, FH2 domain"/>
    <property type="match status" value="1"/>
</dbReference>
<dbReference type="InterPro" id="IPR015425">
    <property type="entry name" value="FH2_Formin"/>
</dbReference>
<dbReference type="InterPro" id="IPR042201">
    <property type="entry name" value="FH2_Formin_sf"/>
</dbReference>
<dbReference type="InterPro" id="IPR051144">
    <property type="entry name" value="Formin_homology_domain"/>
</dbReference>
<dbReference type="PANTHER" id="PTHR45733">
    <property type="entry name" value="FORMIN-J"/>
    <property type="match status" value="1"/>
</dbReference>
<dbReference type="PANTHER" id="PTHR45733:SF17">
    <property type="entry name" value="FORMIN-LIKE PROTEIN 14"/>
    <property type="match status" value="1"/>
</dbReference>
<dbReference type="Pfam" id="PF02181">
    <property type="entry name" value="FH2"/>
    <property type="match status" value="1"/>
</dbReference>
<dbReference type="SUPFAM" id="SSF101447">
    <property type="entry name" value="Formin homology 2 domain (FH2 domain)"/>
    <property type="match status" value="1"/>
</dbReference>
<dbReference type="PROSITE" id="PS51444">
    <property type="entry name" value="FH2"/>
    <property type="match status" value="1"/>
</dbReference>
<name>FH12_ARATH</name>
<accession>Q9C7S1</accession>